<keyword id="KW-0004">4Fe-4S</keyword>
<keyword id="KW-0408">Iron</keyword>
<keyword id="KW-0411">Iron-sulfur</keyword>
<keyword id="KW-0414">Isoprene biosynthesis</keyword>
<keyword id="KW-0479">Metal-binding</keyword>
<keyword id="KW-0560">Oxidoreductase</keyword>
<keyword id="KW-1185">Reference proteome</keyword>
<proteinExistence type="inferred from homology"/>
<name>ISPG_GLOC7</name>
<organism>
    <name type="scientific">Gloeothece citriformis (strain PCC 7424)</name>
    <name type="common">Cyanothece sp. (strain PCC 7424)</name>
    <dbReference type="NCBI Taxonomy" id="65393"/>
    <lineage>
        <taxon>Bacteria</taxon>
        <taxon>Bacillati</taxon>
        <taxon>Cyanobacteriota</taxon>
        <taxon>Cyanophyceae</taxon>
        <taxon>Oscillatoriophycideae</taxon>
        <taxon>Chroococcales</taxon>
        <taxon>Aphanothecaceae</taxon>
        <taxon>Gloeothece</taxon>
        <taxon>Gloeothece citriformis</taxon>
    </lineage>
</organism>
<comment type="function">
    <text evidence="1">Converts 2C-methyl-D-erythritol 2,4-cyclodiphosphate (ME-2,4cPP) into 1-hydroxy-2-methyl-2-(E)-butenyl 4-diphosphate.</text>
</comment>
<comment type="catalytic activity">
    <reaction evidence="1">
        <text>(2E)-4-hydroxy-3-methylbut-2-enyl diphosphate + 2 oxidized [2Fe-2S]-[ferredoxin] + H2O = 2-C-methyl-D-erythritol 2,4-cyclic diphosphate + 2 reduced [2Fe-2S]-[ferredoxin] + H(+)</text>
        <dbReference type="Rhea" id="RHEA:26119"/>
        <dbReference type="Rhea" id="RHEA-COMP:10000"/>
        <dbReference type="Rhea" id="RHEA-COMP:10001"/>
        <dbReference type="ChEBI" id="CHEBI:15377"/>
        <dbReference type="ChEBI" id="CHEBI:15378"/>
        <dbReference type="ChEBI" id="CHEBI:33737"/>
        <dbReference type="ChEBI" id="CHEBI:33738"/>
        <dbReference type="ChEBI" id="CHEBI:58483"/>
        <dbReference type="ChEBI" id="CHEBI:128753"/>
        <dbReference type="EC" id="1.17.7.1"/>
    </reaction>
</comment>
<comment type="cofactor">
    <cofactor evidence="1">
        <name>[4Fe-4S] cluster</name>
        <dbReference type="ChEBI" id="CHEBI:49883"/>
    </cofactor>
    <text evidence="1">Binds 1 [4Fe-4S] cluster.</text>
</comment>
<comment type="pathway">
    <text evidence="1">Isoprenoid biosynthesis; isopentenyl diphosphate biosynthesis via DXP pathway; isopentenyl diphosphate from 1-deoxy-D-xylulose 5-phosphate: step 5/6.</text>
</comment>
<comment type="similarity">
    <text evidence="1">Belongs to the IspG family.</text>
</comment>
<feature type="chain" id="PRO_1000118164" description="4-hydroxy-3-methylbut-2-en-1-yl diphosphate synthase (ferredoxin)">
    <location>
        <begin position="1"/>
        <end position="406"/>
    </location>
</feature>
<feature type="binding site" evidence="1">
    <location>
        <position position="315"/>
    </location>
    <ligand>
        <name>[4Fe-4S] cluster</name>
        <dbReference type="ChEBI" id="CHEBI:49883"/>
    </ligand>
</feature>
<feature type="binding site" evidence="1">
    <location>
        <position position="318"/>
    </location>
    <ligand>
        <name>[4Fe-4S] cluster</name>
        <dbReference type="ChEBI" id="CHEBI:49883"/>
    </ligand>
</feature>
<feature type="binding site" evidence="1">
    <location>
        <position position="349"/>
    </location>
    <ligand>
        <name>[4Fe-4S] cluster</name>
        <dbReference type="ChEBI" id="CHEBI:49883"/>
    </ligand>
</feature>
<feature type="binding site" evidence="1">
    <location>
        <position position="356"/>
    </location>
    <ligand>
        <name>[4Fe-4S] cluster</name>
        <dbReference type="ChEBI" id="CHEBI:49883"/>
    </ligand>
</feature>
<evidence type="ECO:0000255" key="1">
    <source>
        <dbReference type="HAMAP-Rule" id="MF_00159"/>
    </source>
</evidence>
<sequence length="406" mass="44883">MQTLDTPLTPTSTPSLFDTTIHRRKTRGVKVGDITIGGGYPVVVQSMINEDTLDIDGSVAAIRRLHEIGCEIVRVTVPSMAHAKALAEIKEKLIKTYKAVPLVADVHHNGMKIALEVAKHVDKVRINPGLYVFEKPRADRTEYTPTEFEEIGEKIRETLKPLVLTLKEQDKAMRIGVNHGSLAERMLFTYGDTPEGMVESALEFIRICESLEFYNIVISLKASRVPVMLAAYRLMVKRMDELGMDYPLHLGVTEAGDGEYGRIKSTAGIGTLLAEGIGDTIRVSLTEAPEKEIPVCYSILQALGLRKTMVEYVACPSCGRTLFNLEEVLHKVREATKHLTGLDIAVMGCIVNGPGEMADADYGYVGKQAGYISLYRGREEIKKVPEDQGVEELINLIKADGRWVDP</sequence>
<accession>B7KJJ4</accession>
<dbReference type="EC" id="1.17.7.1" evidence="1"/>
<dbReference type="EMBL" id="CP001291">
    <property type="protein sequence ID" value="ACK73671.1"/>
    <property type="molecule type" value="Genomic_DNA"/>
</dbReference>
<dbReference type="RefSeq" id="WP_015957247.1">
    <property type="nucleotide sequence ID" value="NC_011729.1"/>
</dbReference>
<dbReference type="SMR" id="B7KJJ4"/>
<dbReference type="STRING" id="65393.PCC7424_5324"/>
<dbReference type="KEGG" id="cyc:PCC7424_5324"/>
<dbReference type="eggNOG" id="COG0821">
    <property type="taxonomic scope" value="Bacteria"/>
</dbReference>
<dbReference type="HOGENOM" id="CLU_042258_0_0_3"/>
<dbReference type="OrthoDB" id="9803214at2"/>
<dbReference type="UniPathway" id="UPA00056">
    <property type="reaction ID" value="UER00096"/>
</dbReference>
<dbReference type="Proteomes" id="UP000002384">
    <property type="component" value="Chromosome"/>
</dbReference>
<dbReference type="GO" id="GO:0051539">
    <property type="term" value="F:4 iron, 4 sulfur cluster binding"/>
    <property type="evidence" value="ECO:0007669"/>
    <property type="project" value="UniProtKB-UniRule"/>
</dbReference>
<dbReference type="GO" id="GO:0046429">
    <property type="term" value="F:4-hydroxy-3-methylbut-2-en-1-yl diphosphate synthase activity (ferredoxin)"/>
    <property type="evidence" value="ECO:0007669"/>
    <property type="project" value="UniProtKB-UniRule"/>
</dbReference>
<dbReference type="GO" id="GO:0005506">
    <property type="term" value="F:iron ion binding"/>
    <property type="evidence" value="ECO:0007669"/>
    <property type="project" value="InterPro"/>
</dbReference>
<dbReference type="GO" id="GO:0019288">
    <property type="term" value="P:isopentenyl diphosphate biosynthetic process, methylerythritol 4-phosphate pathway"/>
    <property type="evidence" value="ECO:0007669"/>
    <property type="project" value="UniProtKB-UniRule"/>
</dbReference>
<dbReference type="GO" id="GO:0016114">
    <property type="term" value="P:terpenoid biosynthetic process"/>
    <property type="evidence" value="ECO:0007669"/>
    <property type="project" value="InterPro"/>
</dbReference>
<dbReference type="FunFam" id="3.20.20.20:FF:000005">
    <property type="entry name" value="4-hydroxy-3-methylbut-2-en-1-yl diphosphate synthase (flavodoxin)"/>
    <property type="match status" value="1"/>
</dbReference>
<dbReference type="FunFam" id="3.30.413.10:FF:000006">
    <property type="entry name" value="4-hydroxy-3-methylbut-2-en-1-yl diphosphate synthase (flavodoxin)"/>
    <property type="match status" value="1"/>
</dbReference>
<dbReference type="Gene3D" id="3.20.20.20">
    <property type="entry name" value="Dihydropteroate synthase-like"/>
    <property type="match status" value="1"/>
</dbReference>
<dbReference type="Gene3D" id="3.30.413.10">
    <property type="entry name" value="Sulfite Reductase Hemoprotein, domain 1"/>
    <property type="match status" value="1"/>
</dbReference>
<dbReference type="HAMAP" id="MF_00159">
    <property type="entry name" value="IspG"/>
    <property type="match status" value="1"/>
</dbReference>
<dbReference type="InterPro" id="IPR011005">
    <property type="entry name" value="Dihydropteroate_synth-like_sf"/>
</dbReference>
<dbReference type="InterPro" id="IPR016425">
    <property type="entry name" value="IspG_bac"/>
</dbReference>
<dbReference type="InterPro" id="IPR004588">
    <property type="entry name" value="IspG_bac-typ"/>
</dbReference>
<dbReference type="InterPro" id="IPR045854">
    <property type="entry name" value="NO2/SO3_Rdtase_4Fe4S_sf"/>
</dbReference>
<dbReference type="NCBIfam" id="TIGR00612">
    <property type="entry name" value="ispG_gcpE"/>
    <property type="match status" value="1"/>
</dbReference>
<dbReference type="NCBIfam" id="NF001540">
    <property type="entry name" value="PRK00366.1"/>
    <property type="match status" value="1"/>
</dbReference>
<dbReference type="PANTHER" id="PTHR30454">
    <property type="entry name" value="4-HYDROXY-3-METHYLBUT-2-EN-1-YL DIPHOSPHATE SYNTHASE"/>
    <property type="match status" value="1"/>
</dbReference>
<dbReference type="PANTHER" id="PTHR30454:SF0">
    <property type="entry name" value="4-HYDROXY-3-METHYLBUT-2-EN-1-YL DIPHOSPHATE SYNTHASE (FERREDOXIN), CHLOROPLASTIC"/>
    <property type="match status" value="1"/>
</dbReference>
<dbReference type="Pfam" id="PF04551">
    <property type="entry name" value="GcpE"/>
    <property type="match status" value="1"/>
</dbReference>
<dbReference type="PIRSF" id="PIRSF004640">
    <property type="entry name" value="IspG"/>
    <property type="match status" value="1"/>
</dbReference>
<dbReference type="SUPFAM" id="SSF56014">
    <property type="entry name" value="Nitrite and sulphite reductase 4Fe-4S domain-like"/>
    <property type="match status" value="1"/>
</dbReference>
<gene>
    <name evidence="1" type="primary">ispG</name>
    <name type="ordered locus">PCC7424_5324</name>
</gene>
<protein>
    <recommendedName>
        <fullName evidence="1">4-hydroxy-3-methylbut-2-en-1-yl diphosphate synthase (ferredoxin)</fullName>
        <ecNumber evidence="1">1.17.7.1</ecNumber>
    </recommendedName>
    <alternativeName>
        <fullName evidence="1">1-hydroxy-2-methyl-2-(E)-butenyl 4-diphosphate synthase</fullName>
    </alternativeName>
</protein>
<reference key="1">
    <citation type="journal article" date="2011" name="MBio">
        <title>Novel metabolic attributes of the genus Cyanothece, comprising a group of unicellular nitrogen-fixing Cyanobacteria.</title>
        <authorList>
            <person name="Bandyopadhyay A."/>
            <person name="Elvitigala T."/>
            <person name="Welsh E."/>
            <person name="Stockel J."/>
            <person name="Liberton M."/>
            <person name="Min H."/>
            <person name="Sherman L.A."/>
            <person name="Pakrasi H.B."/>
        </authorList>
    </citation>
    <scope>NUCLEOTIDE SEQUENCE [LARGE SCALE GENOMIC DNA]</scope>
    <source>
        <strain>PCC 7424</strain>
    </source>
</reference>